<proteinExistence type="evidence at protein level"/>
<accession>Q9I6H0</accession>
<gene>
    <name evidence="4" type="primary">aphB</name>
    <name evidence="8" type="ordered locus">PA0321</name>
</gene>
<organism>
    <name type="scientific">Pseudomonas aeruginosa (strain ATCC 15692 / DSM 22644 / CIP 104116 / JCM 14847 / LMG 12228 / 1C / PRS 101 / PAO1)</name>
    <dbReference type="NCBI Taxonomy" id="208964"/>
    <lineage>
        <taxon>Bacteria</taxon>
        <taxon>Pseudomonadati</taxon>
        <taxon>Pseudomonadota</taxon>
        <taxon>Gammaproteobacteria</taxon>
        <taxon>Pseudomonadales</taxon>
        <taxon>Pseudomonadaceae</taxon>
        <taxon>Pseudomonas</taxon>
    </lineage>
</organism>
<keyword id="KW-0378">Hydrolase</keyword>
<keyword id="KW-0479">Metal-binding</keyword>
<keyword id="KW-1185">Reference proteome</keyword>
<keyword id="KW-0862">Zinc</keyword>
<protein>
    <recommendedName>
        <fullName evidence="5">Acetylpolyamine amidohydrolase 2</fullName>
        <shortName evidence="5">APAH 2</shortName>
        <ecNumber evidence="3">3.5.1.-</ecNumber>
    </recommendedName>
    <alternativeName>
        <fullName evidence="7">Acetylcadaverine deacetylase</fullName>
    </alternativeName>
    <alternativeName>
        <fullName evidence="7">Acetylpolyamine deacetylase</fullName>
    </alternativeName>
    <alternativeName>
        <fullName evidence="7">Acetylputrescine deacetylase</fullName>
        <ecNumber evidence="3">3.5.1.62</ecNumber>
    </alternativeName>
</protein>
<comment type="function">
    <text evidence="3">Catalyzes the deacetylation of acetylated polyamines such as N-acetylputrescine and N-acetylcadaverine. Plays an important role in the metabolism of acetylated polyamines in P.aeruginosa. Is involved in the degradation pathways of N-acetylputrescine and N-acetylcadaverine, that allow P.aeruginosa to utilize these acetylpolyamines as a carbon source under glucose starvation. Shows nearly no activity against N(1)-acetylspermine and N(1)-acetylspermidine. Can also hydrolyze artificial trifluoroacetylated lysine-derivative, and to a lesser extent, acetylated lysine-derivative.</text>
</comment>
<comment type="catalytic activity">
    <reaction evidence="3">
        <text>N-acetylputrescine + H2O = putrescine + acetate</text>
        <dbReference type="Rhea" id="RHEA:23412"/>
        <dbReference type="ChEBI" id="CHEBI:15377"/>
        <dbReference type="ChEBI" id="CHEBI:30089"/>
        <dbReference type="ChEBI" id="CHEBI:58263"/>
        <dbReference type="ChEBI" id="CHEBI:326268"/>
        <dbReference type="EC" id="3.5.1.62"/>
    </reaction>
</comment>
<comment type="catalytic activity">
    <reaction evidence="3">
        <text>N-acetylcadaverine + H2O = cadaverine + acetate</text>
        <dbReference type="Rhea" id="RHEA:51892"/>
        <dbReference type="ChEBI" id="CHEBI:15377"/>
        <dbReference type="ChEBI" id="CHEBI:30089"/>
        <dbReference type="ChEBI" id="CHEBI:58384"/>
        <dbReference type="ChEBI" id="CHEBI:134408"/>
    </reaction>
</comment>
<comment type="cofactor">
    <cofactor evidence="1">
        <name>Zn(2+)</name>
        <dbReference type="ChEBI" id="CHEBI:29105"/>
    </cofactor>
    <text evidence="1">Binds 1 zinc ion per subunit.</text>
</comment>
<comment type="biophysicochemical properties">
    <kinetics>
        <KM evidence="3">284 uM for N-acetylcadaverine</KM>
        <KM evidence="3">411 uM for N-acetylputrescine</KM>
        <KM evidence="3">22 uM for Boc-Lys(Ac)-AMC</KM>
        <KM evidence="3">11 uM for Boc-Lys(TFA)-AMC</KM>
        <Vmax evidence="3">7.6 nmol/sec/mg enzyme with N-acetylcadaverine as substrate</Vmax>
        <Vmax evidence="3">14.2 nmol/sec/mg enzyme with N-acetylputrescine as substrate</Vmax>
        <Vmax evidence="3">0.017 nmol/sec/mg enzyme with Boc-Lys(Ac)-AMC as substrate</Vmax>
        <Vmax evidence="3">21.0 nmol/sec/mg enzyme with Boc-Lys(TFA)-AMC as substrate</Vmax>
    </kinetics>
</comment>
<comment type="pathway">
    <text evidence="3">Amine and polyamine metabolism.</text>
</comment>
<comment type="subunit">
    <text evidence="1">Homodimer.</text>
</comment>
<comment type="induction">
    <text evidence="2">By exogenous acetylputrescine and agmatine, but not by putrescine.</text>
</comment>
<comment type="disruption phenotype">
    <text evidence="3">Cells lacking this gene show a markedly delayed growth with a slight hint of increase after 15 hours using N-acetylcadaverine as sole carbon source, and display an elongated lag-phase of approximately 6 hours before growing on N-acetylputrescine. The deletion mutant strain exhibits only marginal changes in biofilm biomass in comparison to the wild-type.</text>
</comment>
<comment type="similarity">
    <text evidence="6">Belongs to the histone deacetylase family.</text>
</comment>
<feature type="chain" id="PRO_0000439408" description="Acetylpolyamine amidohydrolase 2">
    <location>
        <begin position="1"/>
        <end position="344"/>
    </location>
</feature>
<feature type="active site" description="Proton donor/acceptor" evidence="1">
    <location>
        <position position="159"/>
    </location>
</feature>
<feature type="binding site" evidence="1">
    <location>
        <position position="195"/>
    </location>
    <ligand>
        <name>Zn(2+)</name>
        <dbReference type="ChEBI" id="CHEBI:29105"/>
    </ligand>
</feature>
<feature type="binding site" evidence="1">
    <location>
        <position position="197"/>
    </location>
    <ligand>
        <name>Zn(2+)</name>
        <dbReference type="ChEBI" id="CHEBI:29105"/>
    </ligand>
</feature>
<feature type="binding site" evidence="1">
    <location>
        <position position="284"/>
    </location>
    <ligand>
        <name>Zn(2+)</name>
        <dbReference type="ChEBI" id="CHEBI:29105"/>
    </ligand>
</feature>
<feature type="site" description="Polarizes the scissile carbonyl of the substrate" evidence="1">
    <location>
        <position position="323"/>
    </location>
</feature>
<reference key="1">
    <citation type="journal article" date="2000" name="Nature">
        <title>Complete genome sequence of Pseudomonas aeruginosa PAO1, an opportunistic pathogen.</title>
        <authorList>
            <person name="Stover C.K."/>
            <person name="Pham X.-Q.T."/>
            <person name="Erwin A.L."/>
            <person name="Mizoguchi S.D."/>
            <person name="Warrener P."/>
            <person name="Hickey M.J."/>
            <person name="Brinkman F.S.L."/>
            <person name="Hufnagle W.O."/>
            <person name="Kowalik D.J."/>
            <person name="Lagrou M."/>
            <person name="Garber R.L."/>
            <person name="Goltry L."/>
            <person name="Tolentino E."/>
            <person name="Westbrock-Wadman S."/>
            <person name="Yuan Y."/>
            <person name="Brody L.L."/>
            <person name="Coulter S.N."/>
            <person name="Folger K.R."/>
            <person name="Kas A."/>
            <person name="Larbig K."/>
            <person name="Lim R.M."/>
            <person name="Smith K.A."/>
            <person name="Spencer D.H."/>
            <person name="Wong G.K.-S."/>
            <person name="Wu Z."/>
            <person name="Paulsen I.T."/>
            <person name="Reizer J."/>
            <person name="Saier M.H. Jr."/>
            <person name="Hancock R.E.W."/>
            <person name="Lory S."/>
            <person name="Olson M.V."/>
        </authorList>
    </citation>
    <scope>NUCLEOTIDE SEQUENCE [LARGE SCALE GENOMIC DNA]</scope>
    <source>
        <strain>ATCC 15692 / DSM 22644 / CIP 104116 / JCM 14847 / LMG 12228 / 1C / PRS 101 / PAO1</strain>
    </source>
</reference>
<reference key="2">
    <citation type="journal article" date="2008" name="J. Bacteriol.">
        <title>Transcriptome analysis of agmatine and putrescine catabolism in Pseudomonas aeruginosa PAO1.</title>
        <authorList>
            <person name="Chou H.T."/>
            <person name="Kwon D.H."/>
            <person name="Hegazy M."/>
            <person name="Lu C.D."/>
        </authorList>
    </citation>
    <scope>INDUCTION</scope>
    <source>
        <strain>ATCC 15692 / DSM 22644 / CIP 104116 / JCM 14847 / LMG 12228 / 1C / PRS 101 / PAO1</strain>
    </source>
</reference>
<reference key="3">
    <citation type="journal article" date="2016" name="BMC Biochem.">
        <title>Substrate specificity and function of acetylpolyamine amidohydrolases from Pseudomonas aeruginosa.</title>
        <authorList>
            <person name="Kraemer A."/>
            <person name="Herzer J."/>
            <person name="Overhage J."/>
            <person name="Meyer-Almes F.J."/>
        </authorList>
    </citation>
    <scope>FUNCTION</scope>
    <scope>CATALYTIC ACTIVITY</scope>
    <scope>SUBSTRATE SPECIFICITY</scope>
    <scope>BIOPHYSICOCHEMICAL PROPERTIES</scope>
    <scope>DISRUPTION PHENOTYPE</scope>
    <scope>PATHWAY</scope>
    <source>
        <strain>ATCC 15692 / DSM 22644 / CIP 104116 / JCM 14847 / LMG 12228 / 1C / PRS 101 / PAO1</strain>
    </source>
</reference>
<evidence type="ECO:0000250" key="1">
    <source>
        <dbReference type="UniProtKB" id="Q48935"/>
    </source>
</evidence>
<evidence type="ECO:0000269" key="2">
    <source>
    </source>
</evidence>
<evidence type="ECO:0000269" key="3">
    <source>
    </source>
</evidence>
<evidence type="ECO:0000303" key="4">
    <source>
    </source>
</evidence>
<evidence type="ECO:0000303" key="5">
    <source>
    </source>
</evidence>
<evidence type="ECO:0000305" key="6"/>
<evidence type="ECO:0000305" key="7">
    <source>
    </source>
</evidence>
<evidence type="ECO:0000312" key="8">
    <source>
        <dbReference type="EMBL" id="AAG03710.1"/>
    </source>
</evidence>
<name>APAH2_PSEAE</name>
<sequence>MLTIYSDDHRLHHGRHELIGGQFTPCFEKPSRADMVLDRVKAVGLGEVRAPRDFGLEPIRRVHSEGFVRFLQNAWQDWLATGRSHDMLPIAWPTRRLRQTEPDNIDGRLGYYSFDAGAPITAGTWQAITSSANVALSGQSELANGARSVFSLCRPPGHHAAADYMGGYCFFNNAAIAAQAFLDRGAGRVAILDVDYHHGNGTQDIFYDRADVLFTSIHGDPRFEYPYFLGYADEKGNGVGTGYNFNYPLAAGSDWATWSQALQAAIRQIQAYAADALIVSLGVDTFKEDPISQFRLDSPDYLRMGEAIGKLGLATLFVMEGGYAVEEIGINAVNVLQGFEGVHR</sequence>
<dbReference type="EC" id="3.5.1.-" evidence="3"/>
<dbReference type="EC" id="3.5.1.62" evidence="3"/>
<dbReference type="EMBL" id="AE004091">
    <property type="protein sequence ID" value="AAG03710.1"/>
    <property type="molecule type" value="Genomic_DNA"/>
</dbReference>
<dbReference type="PIR" id="B83605">
    <property type="entry name" value="B83605"/>
</dbReference>
<dbReference type="RefSeq" id="NP_249012.1">
    <property type="nucleotide sequence ID" value="NC_002516.2"/>
</dbReference>
<dbReference type="RefSeq" id="WP_003112950.1">
    <property type="nucleotide sequence ID" value="NZ_QZGE01000016.1"/>
</dbReference>
<dbReference type="SMR" id="Q9I6H0"/>
<dbReference type="STRING" id="208964.PA0321"/>
<dbReference type="PaxDb" id="208964-PA0321"/>
<dbReference type="DNASU" id="878360"/>
<dbReference type="GeneID" id="878360"/>
<dbReference type="KEGG" id="pae:PA0321"/>
<dbReference type="PATRIC" id="fig|208964.12.peg.337"/>
<dbReference type="PseudoCAP" id="PA0321"/>
<dbReference type="HOGENOM" id="CLU_007727_8_3_6"/>
<dbReference type="InParanoid" id="Q9I6H0"/>
<dbReference type="OrthoDB" id="9808367at2"/>
<dbReference type="PhylomeDB" id="Q9I6H0"/>
<dbReference type="BioCyc" id="PAER208964:G1FZ6-324-MONOMER"/>
<dbReference type="BRENDA" id="3.5.1.62">
    <property type="organism ID" value="5087"/>
</dbReference>
<dbReference type="Proteomes" id="UP000002438">
    <property type="component" value="Chromosome"/>
</dbReference>
<dbReference type="GO" id="GO:0047609">
    <property type="term" value="F:acetylputrescine deacetylase activity"/>
    <property type="evidence" value="ECO:0007669"/>
    <property type="project" value="UniProtKB-EC"/>
</dbReference>
<dbReference type="GO" id="GO:0004407">
    <property type="term" value="F:histone deacetylase activity"/>
    <property type="evidence" value="ECO:0000318"/>
    <property type="project" value="GO_Central"/>
</dbReference>
<dbReference type="GO" id="GO:0016787">
    <property type="term" value="F:hydrolase activity"/>
    <property type="evidence" value="ECO:0000314"/>
    <property type="project" value="PseudoCAP"/>
</dbReference>
<dbReference type="GO" id="GO:0046872">
    <property type="term" value="F:metal ion binding"/>
    <property type="evidence" value="ECO:0007669"/>
    <property type="project" value="UniProtKB-KW"/>
</dbReference>
<dbReference type="GO" id="GO:0040029">
    <property type="term" value="P:epigenetic regulation of gene expression"/>
    <property type="evidence" value="ECO:0000318"/>
    <property type="project" value="GO_Central"/>
</dbReference>
<dbReference type="GO" id="GO:0006595">
    <property type="term" value="P:polyamine metabolic process"/>
    <property type="evidence" value="ECO:0000314"/>
    <property type="project" value="PseudoCAP"/>
</dbReference>
<dbReference type="CDD" id="cd10001">
    <property type="entry name" value="HDAC_classII_APAH"/>
    <property type="match status" value="1"/>
</dbReference>
<dbReference type="FunFam" id="3.40.800.20:FF:000032">
    <property type="entry name" value="Acetylpolyamine amidohydrolase 2"/>
    <property type="match status" value="1"/>
</dbReference>
<dbReference type="Gene3D" id="3.40.800.20">
    <property type="entry name" value="Histone deacetylase domain"/>
    <property type="match status" value="1"/>
</dbReference>
<dbReference type="InterPro" id="IPR050284">
    <property type="entry name" value="HDAC_PDAC"/>
</dbReference>
<dbReference type="InterPro" id="IPR000286">
    <property type="entry name" value="His_deacetylse"/>
</dbReference>
<dbReference type="InterPro" id="IPR023801">
    <property type="entry name" value="His_deacetylse_dom"/>
</dbReference>
<dbReference type="InterPro" id="IPR037138">
    <property type="entry name" value="His_deacetylse_dom_sf"/>
</dbReference>
<dbReference type="InterPro" id="IPR023696">
    <property type="entry name" value="Ureohydrolase_dom_sf"/>
</dbReference>
<dbReference type="PANTHER" id="PTHR10625:SF17">
    <property type="entry name" value="HISTONE DEACETYLASE 8"/>
    <property type="match status" value="1"/>
</dbReference>
<dbReference type="PANTHER" id="PTHR10625">
    <property type="entry name" value="HISTONE DEACETYLASE HDAC1-RELATED"/>
    <property type="match status" value="1"/>
</dbReference>
<dbReference type="Pfam" id="PF00850">
    <property type="entry name" value="Hist_deacetyl"/>
    <property type="match status" value="1"/>
</dbReference>
<dbReference type="PRINTS" id="PR01270">
    <property type="entry name" value="HDASUPER"/>
</dbReference>
<dbReference type="SUPFAM" id="SSF52768">
    <property type="entry name" value="Arginase/deacetylase"/>
    <property type="match status" value="1"/>
</dbReference>